<protein>
    <recommendedName>
        <fullName>Cytochrome b</fullName>
    </recommendedName>
    <alternativeName>
        <fullName>Complex III subunit 3</fullName>
    </alternativeName>
    <alternativeName>
        <fullName>Complex III subunit III</fullName>
    </alternativeName>
    <alternativeName>
        <fullName>Cytochrome b-c1 complex subunit 3</fullName>
    </alternativeName>
    <alternativeName>
        <fullName>Ubiquinol-cytochrome-c reductase complex cytochrome b subunit</fullName>
    </alternativeName>
</protein>
<gene>
    <name type="primary">MT-CYB</name>
    <name type="synonym">COB</name>
    <name type="synonym">CYTB</name>
    <name type="synonym">MTCYB</name>
</gene>
<feature type="chain" id="PRO_0000061459" description="Cytochrome b">
    <location>
        <begin position="1"/>
        <end position="379"/>
    </location>
</feature>
<feature type="transmembrane region" description="Helical" evidence="2">
    <location>
        <begin position="33"/>
        <end position="53"/>
    </location>
</feature>
<feature type="transmembrane region" description="Helical" evidence="2">
    <location>
        <begin position="77"/>
        <end position="98"/>
    </location>
</feature>
<feature type="transmembrane region" description="Helical" evidence="2">
    <location>
        <begin position="113"/>
        <end position="133"/>
    </location>
</feature>
<feature type="transmembrane region" description="Helical" evidence="2">
    <location>
        <begin position="178"/>
        <end position="198"/>
    </location>
</feature>
<feature type="transmembrane region" description="Helical" evidence="2">
    <location>
        <begin position="226"/>
        <end position="246"/>
    </location>
</feature>
<feature type="transmembrane region" description="Helical" evidence="2">
    <location>
        <begin position="288"/>
        <end position="308"/>
    </location>
</feature>
<feature type="transmembrane region" description="Helical" evidence="2">
    <location>
        <begin position="320"/>
        <end position="340"/>
    </location>
</feature>
<feature type="transmembrane region" description="Helical" evidence="2">
    <location>
        <begin position="347"/>
        <end position="367"/>
    </location>
</feature>
<feature type="binding site" description="axial binding residue" evidence="2">
    <location>
        <position position="83"/>
    </location>
    <ligand>
        <name>heme b</name>
        <dbReference type="ChEBI" id="CHEBI:60344"/>
        <label>b562</label>
    </ligand>
    <ligandPart>
        <name>Fe</name>
        <dbReference type="ChEBI" id="CHEBI:18248"/>
    </ligandPart>
</feature>
<feature type="binding site" description="axial binding residue" evidence="2">
    <location>
        <position position="97"/>
    </location>
    <ligand>
        <name>heme b</name>
        <dbReference type="ChEBI" id="CHEBI:60344"/>
        <label>b566</label>
    </ligand>
    <ligandPart>
        <name>Fe</name>
        <dbReference type="ChEBI" id="CHEBI:18248"/>
    </ligandPart>
</feature>
<feature type="binding site" description="axial binding residue" evidence="2">
    <location>
        <position position="182"/>
    </location>
    <ligand>
        <name>heme b</name>
        <dbReference type="ChEBI" id="CHEBI:60344"/>
        <label>b562</label>
    </ligand>
    <ligandPart>
        <name>Fe</name>
        <dbReference type="ChEBI" id="CHEBI:18248"/>
    </ligandPart>
</feature>
<feature type="binding site" description="axial binding residue" evidence="2">
    <location>
        <position position="196"/>
    </location>
    <ligand>
        <name>heme b</name>
        <dbReference type="ChEBI" id="CHEBI:60344"/>
        <label>b566</label>
    </ligand>
    <ligandPart>
        <name>Fe</name>
        <dbReference type="ChEBI" id="CHEBI:18248"/>
    </ligandPart>
</feature>
<feature type="binding site" evidence="2">
    <location>
        <position position="201"/>
    </location>
    <ligand>
        <name>a ubiquinone</name>
        <dbReference type="ChEBI" id="CHEBI:16389"/>
    </ligand>
</feature>
<sequence>MTNIRKSHPLFKIINDSLIDLPAPSSISSWWNFGSLLGIWLAIQILTGLFLAMHYTSDTTTAFQSVTHICRDVNYGWILRYLHANGASMFFICLFLHVGRGLYYGSYIYKETWNVGVILLFAVMATAFMGYVLPWGQMSFWGATVITNLLSAIPYIGTDLVEWIWGGFSVDKATLTRFFAFHFLFPFIISALVVVHLLFFHETGSNNPTGIPSDSDMIPFHPYYTIKDMLGALVMILALLMLVLFSPDLLGDPDNYIPANPLNTPSHIKPEWYFLFAYAILRSIPNKLGGVLALVLSILILALMPLLHTSKQRSMMFRPLSQCMFWLVVADFLTLTWIGGQPVEHPFIIIGQLASILYFLLILVLMPMMSIVENRLLKW</sequence>
<evidence type="ECO:0000250" key="1"/>
<evidence type="ECO:0000250" key="2">
    <source>
        <dbReference type="UniProtKB" id="P00157"/>
    </source>
</evidence>
<evidence type="ECO:0000255" key="3">
    <source>
        <dbReference type="PROSITE-ProRule" id="PRU00967"/>
    </source>
</evidence>
<evidence type="ECO:0000255" key="4">
    <source>
        <dbReference type="PROSITE-ProRule" id="PRU00968"/>
    </source>
</evidence>
<comment type="function">
    <text evidence="2">Component of the ubiquinol-cytochrome c reductase complex (complex III or cytochrome b-c1 complex) that is part of the mitochondrial respiratory chain. The b-c1 complex mediates electron transfer from ubiquinol to cytochrome c. Contributes to the generation of a proton gradient across the mitochondrial membrane that is then used for ATP synthesis.</text>
</comment>
<comment type="cofactor">
    <cofactor evidence="2">
        <name>heme b</name>
        <dbReference type="ChEBI" id="CHEBI:60344"/>
    </cofactor>
    <text evidence="2">Binds 2 heme b groups non-covalently.</text>
</comment>
<comment type="subunit">
    <text evidence="2">The cytochrome bc1 complex contains 11 subunits: 3 respiratory subunits (MT-CYB, CYC1 and UQCRFS1), 2 core proteins (UQCRC1 and UQCRC2) and 6 low-molecular weight proteins (UQCRH/QCR6, UQCRB/QCR7, UQCRQ/QCR8, UQCR10/QCR9, UQCR11/QCR10 and a cleavage product of UQCRFS1). This cytochrome bc1 complex then forms a dimer.</text>
</comment>
<comment type="subcellular location">
    <subcellularLocation>
        <location evidence="2">Mitochondrion inner membrane</location>
        <topology evidence="2">Multi-pass membrane protein</topology>
    </subcellularLocation>
</comment>
<comment type="miscellaneous">
    <text evidence="1">Heme 1 (or BL or b562) is low-potential and absorbs at about 562 nm, and heme 2 (or BH or b566) is high-potential and absorbs at about 566 nm.</text>
</comment>
<comment type="similarity">
    <text evidence="3 4">Belongs to the cytochrome b family.</text>
</comment>
<comment type="caution">
    <text evidence="2">The full-length protein contains only eight transmembrane helices, not nine as predicted by bioinformatics tools.</text>
</comment>
<reference key="1">
    <citation type="journal article" date="2002" name="Biochem. Genet.">
        <title>Evolutionary relationships of flying foxes (Genus Pteropus) in the Philippines inferred from DNA sequences of cytochrome b gene.</title>
        <authorList>
            <person name="Bastian S.T. Jr."/>
            <person name="Tanaka K."/>
            <person name="Anunciado R.V.P."/>
            <person name="Natural N.G."/>
            <person name="Sumalde A.C."/>
            <person name="Namikawa T."/>
        </authorList>
    </citation>
    <scope>NUCLEOTIDE SEQUENCE [GENOMIC DNA]</scope>
</reference>
<name>CYB_PTEHP</name>
<organism>
    <name type="scientific">Pteropus hypomelanus</name>
    <name type="common">Island flying fox</name>
    <name type="synonym">Variable flying fox</name>
    <dbReference type="NCBI Taxonomy" id="9405"/>
    <lineage>
        <taxon>Eukaryota</taxon>
        <taxon>Metazoa</taxon>
        <taxon>Chordata</taxon>
        <taxon>Craniata</taxon>
        <taxon>Vertebrata</taxon>
        <taxon>Euteleostomi</taxon>
        <taxon>Mammalia</taxon>
        <taxon>Eutheria</taxon>
        <taxon>Laurasiatheria</taxon>
        <taxon>Chiroptera</taxon>
        <taxon>Yinpterochiroptera</taxon>
        <taxon>Pteropodoidea</taxon>
        <taxon>Pteropodidae</taxon>
        <taxon>Pteropodinae</taxon>
        <taxon>Pteropus</taxon>
    </lineage>
</organism>
<accession>Q8SJZ4</accession>
<dbReference type="EMBL" id="AB062472">
    <property type="protein sequence ID" value="BAB86370.1"/>
    <property type="molecule type" value="Genomic_DNA"/>
</dbReference>
<dbReference type="SMR" id="Q8SJZ4"/>
<dbReference type="GO" id="GO:0005743">
    <property type="term" value="C:mitochondrial inner membrane"/>
    <property type="evidence" value="ECO:0007669"/>
    <property type="project" value="UniProtKB-SubCell"/>
</dbReference>
<dbReference type="GO" id="GO:0045275">
    <property type="term" value="C:respiratory chain complex III"/>
    <property type="evidence" value="ECO:0007669"/>
    <property type="project" value="InterPro"/>
</dbReference>
<dbReference type="GO" id="GO:0046872">
    <property type="term" value="F:metal ion binding"/>
    <property type="evidence" value="ECO:0007669"/>
    <property type="project" value="UniProtKB-KW"/>
</dbReference>
<dbReference type="GO" id="GO:0008121">
    <property type="term" value="F:ubiquinol-cytochrome-c reductase activity"/>
    <property type="evidence" value="ECO:0007669"/>
    <property type="project" value="InterPro"/>
</dbReference>
<dbReference type="GO" id="GO:0006122">
    <property type="term" value="P:mitochondrial electron transport, ubiquinol to cytochrome c"/>
    <property type="evidence" value="ECO:0007669"/>
    <property type="project" value="TreeGrafter"/>
</dbReference>
<dbReference type="CDD" id="cd00290">
    <property type="entry name" value="cytochrome_b_C"/>
    <property type="match status" value="1"/>
</dbReference>
<dbReference type="CDD" id="cd00284">
    <property type="entry name" value="Cytochrome_b_N"/>
    <property type="match status" value="1"/>
</dbReference>
<dbReference type="FunFam" id="1.20.810.10:FF:000002">
    <property type="entry name" value="Cytochrome b"/>
    <property type="match status" value="1"/>
</dbReference>
<dbReference type="Gene3D" id="1.20.810.10">
    <property type="entry name" value="Cytochrome Bc1 Complex, Chain C"/>
    <property type="match status" value="1"/>
</dbReference>
<dbReference type="InterPro" id="IPR005798">
    <property type="entry name" value="Cyt_b/b6_C"/>
</dbReference>
<dbReference type="InterPro" id="IPR036150">
    <property type="entry name" value="Cyt_b/b6_C_sf"/>
</dbReference>
<dbReference type="InterPro" id="IPR005797">
    <property type="entry name" value="Cyt_b/b6_N"/>
</dbReference>
<dbReference type="InterPro" id="IPR027387">
    <property type="entry name" value="Cytb/b6-like_sf"/>
</dbReference>
<dbReference type="InterPro" id="IPR030689">
    <property type="entry name" value="Cytochrome_b"/>
</dbReference>
<dbReference type="InterPro" id="IPR048260">
    <property type="entry name" value="Cytochrome_b_C_euk/bac"/>
</dbReference>
<dbReference type="InterPro" id="IPR048259">
    <property type="entry name" value="Cytochrome_b_N_euk/bac"/>
</dbReference>
<dbReference type="InterPro" id="IPR016174">
    <property type="entry name" value="Di-haem_cyt_TM"/>
</dbReference>
<dbReference type="PANTHER" id="PTHR19271">
    <property type="entry name" value="CYTOCHROME B"/>
    <property type="match status" value="1"/>
</dbReference>
<dbReference type="PANTHER" id="PTHR19271:SF16">
    <property type="entry name" value="CYTOCHROME B"/>
    <property type="match status" value="1"/>
</dbReference>
<dbReference type="Pfam" id="PF00032">
    <property type="entry name" value="Cytochrom_B_C"/>
    <property type="match status" value="1"/>
</dbReference>
<dbReference type="Pfam" id="PF00033">
    <property type="entry name" value="Cytochrome_B"/>
    <property type="match status" value="1"/>
</dbReference>
<dbReference type="PIRSF" id="PIRSF038885">
    <property type="entry name" value="COB"/>
    <property type="match status" value="1"/>
</dbReference>
<dbReference type="SUPFAM" id="SSF81648">
    <property type="entry name" value="a domain/subunit of cytochrome bc1 complex (Ubiquinol-cytochrome c reductase)"/>
    <property type="match status" value="1"/>
</dbReference>
<dbReference type="SUPFAM" id="SSF81342">
    <property type="entry name" value="Transmembrane di-heme cytochromes"/>
    <property type="match status" value="1"/>
</dbReference>
<dbReference type="PROSITE" id="PS51003">
    <property type="entry name" value="CYTB_CTER"/>
    <property type="match status" value="1"/>
</dbReference>
<dbReference type="PROSITE" id="PS51002">
    <property type="entry name" value="CYTB_NTER"/>
    <property type="match status" value="1"/>
</dbReference>
<keyword id="KW-0249">Electron transport</keyword>
<keyword id="KW-0349">Heme</keyword>
<keyword id="KW-0408">Iron</keyword>
<keyword id="KW-0472">Membrane</keyword>
<keyword id="KW-0479">Metal-binding</keyword>
<keyword id="KW-0496">Mitochondrion</keyword>
<keyword id="KW-0999">Mitochondrion inner membrane</keyword>
<keyword id="KW-0679">Respiratory chain</keyword>
<keyword id="KW-0812">Transmembrane</keyword>
<keyword id="KW-1133">Transmembrane helix</keyword>
<keyword id="KW-0813">Transport</keyword>
<keyword id="KW-0830">Ubiquinone</keyword>
<geneLocation type="mitochondrion"/>
<proteinExistence type="inferred from homology"/>